<organism>
    <name type="scientific">Rattus norvegicus</name>
    <name type="common">Rat</name>
    <dbReference type="NCBI Taxonomy" id="10116"/>
    <lineage>
        <taxon>Eukaryota</taxon>
        <taxon>Metazoa</taxon>
        <taxon>Chordata</taxon>
        <taxon>Craniata</taxon>
        <taxon>Vertebrata</taxon>
        <taxon>Euteleostomi</taxon>
        <taxon>Mammalia</taxon>
        <taxon>Eutheria</taxon>
        <taxon>Euarchontoglires</taxon>
        <taxon>Glires</taxon>
        <taxon>Rodentia</taxon>
        <taxon>Myomorpha</taxon>
        <taxon>Muroidea</taxon>
        <taxon>Muridae</taxon>
        <taxon>Murinae</taxon>
        <taxon>Rattus</taxon>
    </lineage>
</organism>
<dbReference type="EC" id="4.1.1.130" evidence="2"/>
<dbReference type="EMBL" id="BC099123">
    <property type="protein sequence ID" value="AAH99123.1"/>
    <property type="molecule type" value="mRNA"/>
</dbReference>
<dbReference type="RefSeq" id="NP_001026832.1">
    <property type="nucleotide sequence ID" value="NM_001031662.1"/>
</dbReference>
<dbReference type="SMR" id="Q4FZU1"/>
<dbReference type="FunCoup" id="Q4FZU1">
    <property type="interactions" value="886"/>
</dbReference>
<dbReference type="STRING" id="10116.ENSRNOP00000038869"/>
<dbReference type="iPTMnet" id="Q4FZU1"/>
<dbReference type="PhosphoSitePlus" id="Q4FZU1"/>
<dbReference type="PaxDb" id="10116-ENSRNOP00000038869"/>
<dbReference type="GeneID" id="366013"/>
<dbReference type="KEGG" id="rno:366013"/>
<dbReference type="UCSC" id="RGD:1304638">
    <property type="organism name" value="rat"/>
</dbReference>
<dbReference type="AGR" id="RGD:1304638"/>
<dbReference type="CTD" id="51117"/>
<dbReference type="RGD" id="1304638">
    <property type="gene designation" value="Coq4"/>
</dbReference>
<dbReference type="eggNOG" id="KOG3244">
    <property type="taxonomic scope" value="Eukaryota"/>
</dbReference>
<dbReference type="HOGENOM" id="CLU_061241_1_1_1"/>
<dbReference type="InParanoid" id="Q4FZU1"/>
<dbReference type="OrthoDB" id="54950at9989"/>
<dbReference type="PhylomeDB" id="Q4FZU1"/>
<dbReference type="TreeFam" id="TF314625"/>
<dbReference type="Reactome" id="R-RNO-2142789">
    <property type="pathway name" value="Ubiquinol biosynthesis"/>
</dbReference>
<dbReference type="UniPathway" id="UPA00232"/>
<dbReference type="PRO" id="PR:Q4FZU1"/>
<dbReference type="Proteomes" id="UP000002494">
    <property type="component" value="Unplaced"/>
</dbReference>
<dbReference type="GO" id="GO:0031314">
    <property type="term" value="C:extrinsic component of mitochondrial inner membrane"/>
    <property type="evidence" value="ECO:0007669"/>
    <property type="project" value="UniProtKB-UniRule"/>
</dbReference>
<dbReference type="GO" id="GO:0005743">
    <property type="term" value="C:mitochondrial inner membrane"/>
    <property type="evidence" value="ECO:0000266"/>
    <property type="project" value="RGD"/>
</dbReference>
<dbReference type="GO" id="GO:0005739">
    <property type="term" value="C:mitochondrion"/>
    <property type="evidence" value="ECO:0000318"/>
    <property type="project" value="GO_Central"/>
</dbReference>
<dbReference type="GO" id="GO:0032991">
    <property type="term" value="C:protein-containing complex"/>
    <property type="evidence" value="ECO:0000266"/>
    <property type="project" value="RGD"/>
</dbReference>
<dbReference type="GO" id="GO:0110142">
    <property type="term" value="C:ubiquinone biosynthesis complex"/>
    <property type="evidence" value="ECO:0000266"/>
    <property type="project" value="RGD"/>
</dbReference>
<dbReference type="GO" id="GO:0120539">
    <property type="term" value="F:4-hydroxy-3-methoxy-5-polyprenylbenzoate decarboxylase activity"/>
    <property type="evidence" value="ECO:0000250"/>
    <property type="project" value="UniProtKB"/>
</dbReference>
<dbReference type="GO" id="GO:0016831">
    <property type="term" value="F:carboxy-lyase activity"/>
    <property type="evidence" value="ECO:0000266"/>
    <property type="project" value="RGD"/>
</dbReference>
<dbReference type="GO" id="GO:0006744">
    <property type="term" value="P:ubiquinone biosynthetic process"/>
    <property type="evidence" value="ECO:0000250"/>
    <property type="project" value="UniProtKB"/>
</dbReference>
<dbReference type="HAMAP" id="MF_03111">
    <property type="entry name" value="Coq4"/>
    <property type="match status" value="1"/>
</dbReference>
<dbReference type="InterPro" id="IPR007715">
    <property type="entry name" value="Coq4"/>
</dbReference>
<dbReference type="InterPro" id="IPR027540">
    <property type="entry name" value="Coq4_euk"/>
</dbReference>
<dbReference type="PANTHER" id="PTHR12922">
    <property type="entry name" value="UBIQUINONE BIOSYNTHESIS PROTEIN"/>
    <property type="match status" value="1"/>
</dbReference>
<dbReference type="PANTHER" id="PTHR12922:SF7">
    <property type="entry name" value="UBIQUINONE BIOSYNTHESIS PROTEIN COQ4 HOMOLOG, MITOCHONDRIAL"/>
    <property type="match status" value="1"/>
</dbReference>
<dbReference type="Pfam" id="PF05019">
    <property type="entry name" value="Coq4"/>
    <property type="match status" value="1"/>
</dbReference>
<feature type="transit peptide" description="Mitochondrion" evidence="2">
    <location>
        <begin position="1"/>
        <end position="29"/>
    </location>
</feature>
<feature type="chain" id="PRO_0000320292" description="Ubiquinone biosynthesis protein COQ4 homolog, mitochondrial">
    <location>
        <begin position="30"/>
        <end position="265"/>
    </location>
</feature>
<feature type="binding site" evidence="2">
    <location>
        <position position="163"/>
    </location>
    <ligand>
        <name>Zn(2+)</name>
        <dbReference type="ChEBI" id="CHEBI:29105"/>
    </ligand>
</feature>
<feature type="binding site" evidence="2">
    <location>
        <position position="164"/>
    </location>
    <ligand>
        <name>Zn(2+)</name>
        <dbReference type="ChEBI" id="CHEBI:29105"/>
    </ligand>
</feature>
<feature type="binding site" evidence="2">
    <location>
        <position position="167"/>
    </location>
    <ligand>
        <name>Zn(2+)</name>
        <dbReference type="ChEBI" id="CHEBI:29105"/>
    </ligand>
</feature>
<feature type="binding site" evidence="2">
    <location>
        <position position="179"/>
    </location>
    <ligand>
        <name>Zn(2+)</name>
        <dbReference type="ChEBI" id="CHEBI:29105"/>
    </ligand>
</feature>
<feature type="modified residue" description="Phosphoserine" evidence="1">
    <location>
        <position position="108"/>
    </location>
</feature>
<gene>
    <name type="primary">Coq4</name>
</gene>
<comment type="function">
    <text evidence="2">Lyase that catalyzes the C1-decarboxylation of 4-hydroxy-3-methoxy-5-(all-trans-decaprenyl)benzoic acid into 2-methoxy-6-(all-trans-decaprenyl)phenol during ubiquinone biosynthesis.</text>
</comment>
<comment type="catalytic activity">
    <reaction evidence="2">
        <text>4-hydroxy-3-methoxy-5-(all-trans-decaprenyl)benzoate + H(+) = 2-methoxy-6-(all-trans-decaprenyl)phenol + CO2</text>
        <dbReference type="Rhea" id="RHEA:81275"/>
        <dbReference type="ChEBI" id="CHEBI:15378"/>
        <dbReference type="ChEBI" id="CHEBI:16526"/>
        <dbReference type="ChEBI" id="CHEBI:50774"/>
        <dbReference type="ChEBI" id="CHEBI:62796"/>
        <dbReference type="EC" id="4.1.1.130"/>
    </reaction>
</comment>
<comment type="cofactor">
    <cofactor evidence="2">
        <name>Zn(2+)</name>
        <dbReference type="ChEBI" id="CHEBI:29105"/>
    </cofactor>
</comment>
<comment type="pathway">
    <text evidence="2">Cofactor biosynthesis; ubiquinone biosynthesis.</text>
</comment>
<comment type="subunit">
    <text evidence="2">Component of a multi-subunit COQ enzyme complex, composed of at least COQ3, COQ4, COQ5, COQ6, COQ7 and COQ9.</text>
</comment>
<comment type="subcellular location">
    <subcellularLocation>
        <location evidence="2">Mitochondrion inner membrane</location>
        <topology evidence="2">Peripheral membrane protein</topology>
        <orientation evidence="2">Matrix side</orientation>
    </subcellularLocation>
</comment>
<comment type="similarity">
    <text evidence="2">Belongs to the COQ4 family.</text>
</comment>
<proteinExistence type="evidence at transcript level"/>
<keyword id="KW-0456">Lyase</keyword>
<keyword id="KW-0472">Membrane</keyword>
<keyword id="KW-0479">Metal-binding</keyword>
<keyword id="KW-0496">Mitochondrion</keyword>
<keyword id="KW-0999">Mitochondrion inner membrane</keyword>
<keyword id="KW-0597">Phosphoprotein</keyword>
<keyword id="KW-1185">Reference proteome</keyword>
<keyword id="KW-0809">Transit peptide</keyword>
<keyword id="KW-0831">Ubiquinone biosynthesis</keyword>
<keyword id="KW-0862">Zinc</keyword>
<evidence type="ECO:0000250" key="1">
    <source>
        <dbReference type="UniProtKB" id="Q9Y3A0"/>
    </source>
</evidence>
<evidence type="ECO:0000255" key="2">
    <source>
        <dbReference type="HAMAP-Rule" id="MF_03111"/>
    </source>
</evidence>
<reference key="1">
    <citation type="journal article" date="2004" name="Genome Res.">
        <title>The status, quality, and expansion of the NIH full-length cDNA project: the Mammalian Gene Collection (MGC).</title>
        <authorList>
            <consortium name="The MGC Project Team"/>
        </authorList>
    </citation>
    <scope>NUCLEOTIDE SEQUENCE [LARGE SCALE MRNA]</scope>
    <source>
        <tissue>Placenta</tissue>
    </source>
</reference>
<protein>
    <recommendedName>
        <fullName evidence="2">Ubiquinone biosynthesis protein COQ4 homolog, mitochondrial</fullName>
    </recommendedName>
    <alternativeName>
        <fullName>4-hydroxy-3-methoxy-5-polyprenylbenzoate decarboxylase</fullName>
        <ecNumber evidence="2">4.1.1.130</ecNumber>
    </alternativeName>
    <alternativeName>
        <fullName evidence="2">Coenzyme Q biosynthesis protein 4 homolog</fullName>
    </alternativeName>
</protein>
<sequence length="265" mass="30013">MATLLLRSQRLHRSLRHRTRPTVDVLLRAASHGARLLYPDHIPTTPLQKMLLAAGAAGMALYNPYRHDMVAVLGETTGCHTLKFLRDQMKKDPEGAQILQERPRISLSTLDLSKLQSLPEGSLGREYLRFLNANKVSPDTRAPTRFVDDEELAYVIQRYREVHDMLHTLLGMPTNMLGEVVVKWFEAVQTGLPMCILGALFGPVRLRAQSLQVLFSELIPWAIQNGRRAPCVLNIYYEQRWEQPLTALREELGISPPPKHIQGLA</sequence>
<name>COQ4_RAT</name>
<accession>Q4FZU1</accession>